<sequence length="280" mass="31062">MNLVAALVLCFALLSSVRGDDTTNTIDHDQVKPFPQPEPVTISEKAAVKYKPQLEIGDGCVSFPAVNAAGEITGGLKGTKDTEACTEAPLGSQVYGRSTWFQDKWAMMYSWYFPKNFCAYKAAGRHDWANVVIWIDNPAAENVTFLGASLSQQTLEPIKLAILPMGTRNEEPYQNQKAIPMMAFAGAERITTGRVGRWSYTYKYVAGSNTTMRFSHSYPGTWGWIDMTFADSDGESQDLIMWNQLTDKARAALESADFGDTQVPFTDKNFDTNLQAAWPF</sequence>
<keyword id="KW-0325">Glycoprotein</keyword>
<keyword id="KW-0964">Secreted</keyword>
<keyword id="KW-0732">Signal</keyword>
<keyword id="KW-0843">Virulence</keyword>
<proteinExistence type="evidence at transcript level"/>
<comment type="function">
    <text evidence="4">Secreted effector that contributes strongly to virulence during infection by P.capsici.</text>
</comment>
<comment type="subcellular location">
    <subcellularLocation>
        <location evidence="7">Secreted</location>
    </subcellularLocation>
</comment>
<comment type="domain">
    <text evidence="7">Key residues/motif important for the effector activities are degenerated in most NLPs, including the nlp24 peptide consisting of the conserved region I (11-aa immunogenic part) and conserved region II (the heptapeptide GHRHDWE motif) that is important for phytotoxic activity.</text>
</comment>
<comment type="similarity">
    <text evidence="6">Belongs to the Necrosis inducing protein (NPP1) family.</text>
</comment>
<reference key="1">
    <citation type="submission" date="2017-05" db="EMBL/GenBank/DDBJ databases">
        <authorList>
            <person name="Song R."/>
            <person name="Chenine A.L."/>
            <person name="Ruprecht R.M."/>
        </authorList>
    </citation>
    <scope>NUCLEOTIDE SEQUENCE [MRNA]</scope>
    <source>
        <strain>Pc537</strain>
    </source>
</reference>
<reference key="2">
    <citation type="journal article" date="2018" name="Mol. Genet. Genomics">
        <title>Identification and functional analysis of the NLP-encoding genes from the phytopathogenic oomycete Phytophthora capsici.</title>
        <authorList>
            <person name="Chen X.R."/>
            <person name="Huang S.X."/>
            <person name="Zhang Y."/>
            <person name="Sheng G.L."/>
            <person name="Li Y.P."/>
            <person name="Zhu F."/>
        </authorList>
    </citation>
    <scope>NUCLEOTIDE SEQUENCE [MRNA]</scope>
    <scope>FUNCTION</scope>
    <scope>DOMAIN</scope>
    <source>
        <strain>Pc537</strain>
    </source>
</reference>
<evidence type="ECO:0000250" key="1">
    <source>
        <dbReference type="UniProtKB" id="L7NCS1"/>
    </source>
</evidence>
<evidence type="ECO:0000255" key="2"/>
<evidence type="ECO:0000255" key="3">
    <source>
        <dbReference type="PROSITE-ProRule" id="PRU00498"/>
    </source>
</evidence>
<evidence type="ECO:0000269" key="4">
    <source>
    </source>
</evidence>
<evidence type="ECO:0000303" key="5">
    <source>
    </source>
</evidence>
<evidence type="ECO:0000305" key="6"/>
<evidence type="ECO:0000305" key="7">
    <source>
    </source>
</evidence>
<gene>
    <name evidence="5" type="ORF">Pc553546</name>
</gene>
<name>NLP46_PHYCP</name>
<dbReference type="EMBL" id="MF135593">
    <property type="protein sequence ID" value="AUD40039.1"/>
    <property type="molecule type" value="mRNA"/>
</dbReference>
<dbReference type="SMR" id="A0A2R2Z572"/>
<dbReference type="VEuPathDB" id="FungiDB:DVH05_025042"/>
<dbReference type="PHI-base" id="PHI:8062"/>
<dbReference type="GO" id="GO:0005576">
    <property type="term" value="C:extracellular region"/>
    <property type="evidence" value="ECO:0007669"/>
    <property type="project" value="UniProtKB-SubCell"/>
</dbReference>
<dbReference type="InterPro" id="IPR008701">
    <property type="entry name" value="NPP1"/>
</dbReference>
<dbReference type="PANTHER" id="PTHR33657">
    <property type="entry name" value="DOMAIN PROTEIN, PUTATIVE (AFU_ORTHOLOGUE AFUA_5G00600)-RELATED"/>
    <property type="match status" value="1"/>
</dbReference>
<dbReference type="PANTHER" id="PTHR33657:SF8">
    <property type="entry name" value="DOMAIN PROTEIN, PUTATIVE (AFU_ORTHOLOGUE AFUA_5G00600)-RELATED"/>
    <property type="match status" value="1"/>
</dbReference>
<dbReference type="Pfam" id="PF05630">
    <property type="entry name" value="NPP1"/>
    <property type="match status" value="1"/>
</dbReference>
<dbReference type="PIRSF" id="PIRSF029958">
    <property type="entry name" value="Necrosis-inducing_protein"/>
    <property type="match status" value="1"/>
</dbReference>
<organism>
    <name type="scientific">Phytophthora capsici</name>
    <dbReference type="NCBI Taxonomy" id="4784"/>
    <lineage>
        <taxon>Eukaryota</taxon>
        <taxon>Sar</taxon>
        <taxon>Stramenopiles</taxon>
        <taxon>Oomycota</taxon>
        <taxon>Peronosporales</taxon>
        <taxon>Peronosporaceae</taxon>
        <taxon>Phytophthora</taxon>
    </lineage>
</organism>
<protein>
    <recommendedName>
        <fullName evidence="5">NLP effector protein Pc553546</fullName>
    </recommendedName>
    <alternativeName>
        <fullName evidence="5">Necrosis-inducing Pc553546</fullName>
    </alternativeName>
    <alternativeName>
        <fullName evidence="5">Nep1-like protein Pc553546</fullName>
    </alternativeName>
</protein>
<accession>A0A2R2Z572</accession>
<feature type="signal peptide" evidence="2">
    <location>
        <begin position="1"/>
        <end position="19"/>
    </location>
</feature>
<feature type="chain" id="PRO_5015305680" description="NLP effector protein Pc553546">
    <location>
        <begin position="20"/>
        <end position="280"/>
    </location>
</feature>
<feature type="short sequence motif" description="Hepta-peptide GHRHDWE motif" evidence="1">
    <location>
        <begin position="123"/>
        <end position="129"/>
    </location>
</feature>
<feature type="glycosylation site" description="N-linked (GlcNAc...) asparagine" evidence="3">
    <location>
        <position position="142"/>
    </location>
</feature>
<feature type="glycosylation site" description="N-linked (GlcNAc...) asparagine" evidence="3">
    <location>
        <position position="209"/>
    </location>
</feature>